<dbReference type="EC" id="2.5.1.129" evidence="1"/>
<dbReference type="EMBL" id="AL513382">
    <property type="protein sequence ID" value="CAD07588.1"/>
    <property type="molecule type" value="Genomic_DNA"/>
</dbReference>
<dbReference type="EMBL" id="AE014613">
    <property type="protein sequence ID" value="AAO68214.1"/>
    <property type="molecule type" value="Genomic_DNA"/>
</dbReference>
<dbReference type="RefSeq" id="NP_456898.1">
    <property type="nucleotide sequence ID" value="NC_003198.1"/>
</dbReference>
<dbReference type="RefSeq" id="WP_000825682.1">
    <property type="nucleotide sequence ID" value="NZ_WSUR01000029.1"/>
</dbReference>
<dbReference type="SMR" id="P0A246"/>
<dbReference type="STRING" id="220341.gene:17586485"/>
<dbReference type="KEGG" id="stt:t0508"/>
<dbReference type="KEGG" id="sty:STY2586"/>
<dbReference type="PATRIC" id="fig|220341.7.peg.2619"/>
<dbReference type="eggNOG" id="COG0163">
    <property type="taxonomic scope" value="Bacteria"/>
</dbReference>
<dbReference type="HOGENOM" id="CLU_074522_0_1_6"/>
<dbReference type="OMA" id="GATHIQD"/>
<dbReference type="OrthoDB" id="9781577at2"/>
<dbReference type="UniPathway" id="UPA00232"/>
<dbReference type="Proteomes" id="UP000000541">
    <property type="component" value="Chromosome"/>
</dbReference>
<dbReference type="Proteomes" id="UP000002670">
    <property type="component" value="Chromosome"/>
</dbReference>
<dbReference type="GO" id="GO:0016831">
    <property type="term" value="F:carboxy-lyase activity"/>
    <property type="evidence" value="ECO:0007669"/>
    <property type="project" value="TreeGrafter"/>
</dbReference>
<dbReference type="GO" id="GO:0106141">
    <property type="term" value="F:flavin prenyltransferase activity"/>
    <property type="evidence" value="ECO:0007669"/>
    <property type="project" value="UniProtKB-EC"/>
</dbReference>
<dbReference type="GO" id="GO:0006744">
    <property type="term" value="P:ubiquinone biosynthetic process"/>
    <property type="evidence" value="ECO:0007669"/>
    <property type="project" value="UniProtKB-UniPathway"/>
</dbReference>
<dbReference type="FunFam" id="3.40.50.1950:FF:000001">
    <property type="entry name" value="Flavin prenyltransferase UbiX"/>
    <property type="match status" value="1"/>
</dbReference>
<dbReference type="Gene3D" id="3.40.50.1950">
    <property type="entry name" value="Flavin prenyltransferase-like"/>
    <property type="match status" value="1"/>
</dbReference>
<dbReference type="HAMAP" id="MF_01984">
    <property type="entry name" value="ubiX_pad"/>
    <property type="match status" value="1"/>
</dbReference>
<dbReference type="InterPro" id="IPR036551">
    <property type="entry name" value="Flavin_trans-like"/>
</dbReference>
<dbReference type="InterPro" id="IPR003382">
    <property type="entry name" value="Flavoprotein"/>
</dbReference>
<dbReference type="InterPro" id="IPR004507">
    <property type="entry name" value="UbiX-like"/>
</dbReference>
<dbReference type="NCBIfam" id="NF004685">
    <property type="entry name" value="PRK06029.1"/>
    <property type="match status" value="1"/>
</dbReference>
<dbReference type="NCBIfam" id="TIGR00421">
    <property type="entry name" value="ubiX_pad"/>
    <property type="match status" value="1"/>
</dbReference>
<dbReference type="PANTHER" id="PTHR43374">
    <property type="entry name" value="FLAVIN PRENYLTRANSFERASE"/>
    <property type="match status" value="1"/>
</dbReference>
<dbReference type="PANTHER" id="PTHR43374:SF1">
    <property type="entry name" value="FLAVIN PRENYLTRANSFERASE PAD1, MITOCHONDRIAL"/>
    <property type="match status" value="1"/>
</dbReference>
<dbReference type="Pfam" id="PF02441">
    <property type="entry name" value="Flavoprotein"/>
    <property type="match status" value="1"/>
</dbReference>
<dbReference type="SUPFAM" id="SSF52507">
    <property type="entry name" value="Homo-oligomeric flavin-containing Cys decarboxylases, HFCD"/>
    <property type="match status" value="1"/>
</dbReference>
<organism>
    <name type="scientific">Salmonella typhi</name>
    <dbReference type="NCBI Taxonomy" id="90370"/>
    <lineage>
        <taxon>Bacteria</taxon>
        <taxon>Pseudomonadati</taxon>
        <taxon>Pseudomonadota</taxon>
        <taxon>Gammaproteobacteria</taxon>
        <taxon>Enterobacterales</taxon>
        <taxon>Enterobacteriaceae</taxon>
        <taxon>Salmonella</taxon>
    </lineage>
</organism>
<sequence length="189" mass="20691">MKRLIVGISGASGAIYGVRLLQILRDVDSVETHLVMSQAARQTLALETHFSLREVQALADVTHDARDIAASISSGSYPTAGMVILPCSIKTLSGIVHSYTDGLLTRAADVILKERRPLVLCVRETPLHIGHLRLMTQAAEIGAVIMPPVPAFYHLPQTLDDVINQTVNRVLDQFDIPLPHDLFVRWQGA</sequence>
<name>UBIX_SALTI</name>
<feature type="chain" id="PRO_0000134952" description="Flavin prenyltransferase UbiX">
    <location>
        <begin position="1"/>
        <end position="189"/>
    </location>
</feature>
<feature type="binding site" evidence="1">
    <location>
        <begin position="10"/>
        <end position="12"/>
    </location>
    <ligand>
        <name>FMN</name>
        <dbReference type="ChEBI" id="CHEBI:58210"/>
    </ligand>
</feature>
<feature type="binding site" evidence="1">
    <location>
        <position position="37"/>
    </location>
    <ligand>
        <name>FMN</name>
        <dbReference type="ChEBI" id="CHEBI:58210"/>
    </ligand>
</feature>
<feature type="binding site" evidence="1">
    <location>
        <begin position="88"/>
        <end position="91"/>
    </location>
    <ligand>
        <name>FMN</name>
        <dbReference type="ChEBI" id="CHEBI:58210"/>
    </ligand>
</feature>
<feature type="binding site" evidence="1">
    <location>
        <position position="123"/>
    </location>
    <ligand>
        <name>FMN</name>
        <dbReference type="ChEBI" id="CHEBI:58210"/>
    </ligand>
</feature>
<feature type="binding site" evidence="1">
    <location>
        <position position="153"/>
    </location>
    <ligand>
        <name>dimethylallyl phosphate</name>
        <dbReference type="ChEBI" id="CHEBI:88052"/>
    </ligand>
</feature>
<feature type="binding site" evidence="1">
    <location>
        <position position="169"/>
    </location>
    <ligand>
        <name>dimethylallyl phosphate</name>
        <dbReference type="ChEBI" id="CHEBI:88052"/>
    </ligand>
</feature>
<keyword id="KW-0285">Flavoprotein</keyword>
<keyword id="KW-0288">FMN</keyword>
<keyword id="KW-0637">Prenyltransferase</keyword>
<keyword id="KW-0808">Transferase</keyword>
<accession>P0A246</accession>
<accession>P40787</accession>
<comment type="function">
    <text evidence="1">Flavin prenyltransferase that catalyzes the synthesis of the prenylated FMN cofactor (prenyl-FMN) for 4-hydroxy-3-polyprenylbenzoic acid decarboxylase UbiD. The prenyltransferase is metal-independent and links a dimethylallyl moiety from dimethylallyl monophosphate (DMAP) to the flavin N5 and C6 atoms of FMN.</text>
</comment>
<comment type="catalytic activity">
    <reaction evidence="1">
        <text>dimethylallyl phosphate + FMNH2 = prenylated FMNH2 + phosphate</text>
        <dbReference type="Rhea" id="RHEA:37743"/>
        <dbReference type="ChEBI" id="CHEBI:43474"/>
        <dbReference type="ChEBI" id="CHEBI:57618"/>
        <dbReference type="ChEBI" id="CHEBI:87467"/>
        <dbReference type="ChEBI" id="CHEBI:88052"/>
        <dbReference type="EC" id="2.5.1.129"/>
    </reaction>
</comment>
<comment type="pathway">
    <text>Cofactor biosynthesis; ubiquinone biosynthesis.</text>
</comment>
<comment type="similarity">
    <text evidence="1">Belongs to the UbiX/PAD1 family.</text>
</comment>
<proteinExistence type="inferred from homology"/>
<protein>
    <recommendedName>
        <fullName evidence="1">Flavin prenyltransferase UbiX</fullName>
        <ecNumber evidence="1">2.5.1.129</ecNumber>
    </recommendedName>
</protein>
<gene>
    <name evidence="1" type="primary">ubiX</name>
    <name type="ordered locus">STY2586</name>
    <name type="ordered locus">t0508</name>
</gene>
<reference key="1">
    <citation type="journal article" date="2001" name="Nature">
        <title>Complete genome sequence of a multiple drug resistant Salmonella enterica serovar Typhi CT18.</title>
        <authorList>
            <person name="Parkhill J."/>
            <person name="Dougan G."/>
            <person name="James K.D."/>
            <person name="Thomson N.R."/>
            <person name="Pickard D."/>
            <person name="Wain J."/>
            <person name="Churcher C.M."/>
            <person name="Mungall K.L."/>
            <person name="Bentley S.D."/>
            <person name="Holden M.T.G."/>
            <person name="Sebaihia M."/>
            <person name="Baker S."/>
            <person name="Basham D."/>
            <person name="Brooks K."/>
            <person name="Chillingworth T."/>
            <person name="Connerton P."/>
            <person name="Cronin A."/>
            <person name="Davis P."/>
            <person name="Davies R.M."/>
            <person name="Dowd L."/>
            <person name="White N."/>
            <person name="Farrar J."/>
            <person name="Feltwell T."/>
            <person name="Hamlin N."/>
            <person name="Haque A."/>
            <person name="Hien T.T."/>
            <person name="Holroyd S."/>
            <person name="Jagels K."/>
            <person name="Krogh A."/>
            <person name="Larsen T.S."/>
            <person name="Leather S."/>
            <person name="Moule S."/>
            <person name="O'Gaora P."/>
            <person name="Parry C."/>
            <person name="Quail M.A."/>
            <person name="Rutherford K.M."/>
            <person name="Simmonds M."/>
            <person name="Skelton J."/>
            <person name="Stevens K."/>
            <person name="Whitehead S."/>
            <person name="Barrell B.G."/>
        </authorList>
    </citation>
    <scope>NUCLEOTIDE SEQUENCE [LARGE SCALE GENOMIC DNA]</scope>
    <source>
        <strain>CT18</strain>
    </source>
</reference>
<reference key="2">
    <citation type="journal article" date="2003" name="J. Bacteriol.">
        <title>Comparative genomics of Salmonella enterica serovar Typhi strains Ty2 and CT18.</title>
        <authorList>
            <person name="Deng W."/>
            <person name="Liou S.-R."/>
            <person name="Plunkett G. III"/>
            <person name="Mayhew G.F."/>
            <person name="Rose D.J."/>
            <person name="Burland V."/>
            <person name="Kodoyianni V."/>
            <person name="Schwartz D.C."/>
            <person name="Blattner F.R."/>
        </authorList>
    </citation>
    <scope>NUCLEOTIDE SEQUENCE [LARGE SCALE GENOMIC DNA]</scope>
    <source>
        <strain>ATCC 700931 / Ty2</strain>
    </source>
</reference>
<evidence type="ECO:0000255" key="1">
    <source>
        <dbReference type="HAMAP-Rule" id="MF_01984"/>
    </source>
</evidence>